<reference key="1">
    <citation type="journal article" date="2001" name="Nature">
        <title>Genome sequence of enterohaemorrhagic Escherichia coli O157:H7.</title>
        <authorList>
            <person name="Perna N.T."/>
            <person name="Plunkett G. III"/>
            <person name="Burland V."/>
            <person name="Mau B."/>
            <person name="Glasner J.D."/>
            <person name="Rose D.J."/>
            <person name="Mayhew G.F."/>
            <person name="Evans P.S."/>
            <person name="Gregor J."/>
            <person name="Kirkpatrick H.A."/>
            <person name="Posfai G."/>
            <person name="Hackett J."/>
            <person name="Klink S."/>
            <person name="Boutin A."/>
            <person name="Shao Y."/>
            <person name="Miller L."/>
            <person name="Grotbeck E.J."/>
            <person name="Davis N.W."/>
            <person name="Lim A."/>
            <person name="Dimalanta E.T."/>
            <person name="Potamousis K."/>
            <person name="Apodaca J."/>
            <person name="Anantharaman T.S."/>
            <person name="Lin J."/>
            <person name="Yen G."/>
            <person name="Schwartz D.C."/>
            <person name="Welch R.A."/>
            <person name="Blattner F.R."/>
        </authorList>
    </citation>
    <scope>NUCLEOTIDE SEQUENCE [LARGE SCALE GENOMIC DNA]</scope>
    <source>
        <strain>O157:H7 / EDL933 / ATCC 700927 / EHEC</strain>
    </source>
</reference>
<reference key="2">
    <citation type="journal article" date="2001" name="DNA Res.">
        <title>Complete genome sequence of enterohemorrhagic Escherichia coli O157:H7 and genomic comparison with a laboratory strain K-12.</title>
        <authorList>
            <person name="Hayashi T."/>
            <person name="Makino K."/>
            <person name="Ohnishi M."/>
            <person name="Kurokawa K."/>
            <person name="Ishii K."/>
            <person name="Yokoyama K."/>
            <person name="Han C.-G."/>
            <person name="Ohtsubo E."/>
            <person name="Nakayama K."/>
            <person name="Murata T."/>
            <person name="Tanaka M."/>
            <person name="Tobe T."/>
            <person name="Iida T."/>
            <person name="Takami H."/>
            <person name="Honda T."/>
            <person name="Sasakawa C."/>
            <person name="Ogasawara N."/>
            <person name="Yasunaga T."/>
            <person name="Kuhara S."/>
            <person name="Shiba T."/>
            <person name="Hattori M."/>
            <person name="Shinagawa H."/>
        </authorList>
    </citation>
    <scope>NUCLEOTIDE SEQUENCE [LARGE SCALE GENOMIC DNA]</scope>
    <source>
        <strain>O157:H7 / Sakai / RIMD 0509952 / EHEC</strain>
    </source>
</reference>
<name>XYLG_ECO57</name>
<gene>
    <name evidence="1" type="primary">xylG</name>
    <name type="ordered locus">Z4992</name>
    <name type="ordered locus">ECs4450</name>
</gene>
<evidence type="ECO:0000255" key="1">
    <source>
        <dbReference type="HAMAP-Rule" id="MF_01722"/>
    </source>
</evidence>
<sequence length="513" mass="56440">MPYLLEMKNITKTFGSVKAIDNVSLRLNAGEIVSLCGENGSGKSTLMKVLCGIYPHGSYEGEIIFAGEEIQASHIRDTERKGIAIIHQELALVKELTVLENIFLGNEITHNGIMDYDLMTLRCQKLLAQVSLSISPDTRVGDLGLGQQQLVEIAKALNKQVRLLILDEPTASLTEQETSVLLDIIRDLQQHGIACIYISHKLNEVKAISDTICVIRDGQHIGTRDAAGMSEDDIITMMVGRELTALYPNEPHTTGDEILRIEHLTAWHPVNRHIKRVNDVSFSLKRGEILGIAGLVGAGRTETIQCLFGVWPGQWEGKIYIDGKQVDIRNCQQAIAQGIAMVPEDRKRDGIVPVMAVGKNITLAALNKFTGGISQLDDAAEQKCILESIQQLKVKTSSPDLAIGRLSGGNQQKAILARCLLLNPRILILDEPTRGIDIGAKYEIYKLINQLVQQGIAVIVISSELPEVLGLSDRVLVMHEGKLKANLINHNLTQEQVMEAALRSEHHVEKQSV</sequence>
<accession>Q8XDM1</accession>
<accession>Q7A9X2</accession>
<protein>
    <recommendedName>
        <fullName evidence="1">Xylose import ATP-binding protein XylG</fullName>
        <ecNumber evidence="1">7.5.2.10</ecNumber>
    </recommendedName>
</protein>
<dbReference type="EC" id="7.5.2.10" evidence="1"/>
<dbReference type="EMBL" id="AE005174">
    <property type="protein sequence ID" value="AAG58716.1"/>
    <property type="molecule type" value="Genomic_DNA"/>
</dbReference>
<dbReference type="EMBL" id="BA000007">
    <property type="protein sequence ID" value="BAB37873.1"/>
    <property type="molecule type" value="Genomic_DNA"/>
</dbReference>
<dbReference type="PIR" id="B91185">
    <property type="entry name" value="B91185"/>
</dbReference>
<dbReference type="PIR" id="H86031">
    <property type="entry name" value="H86031"/>
</dbReference>
<dbReference type="RefSeq" id="NP_312477.1">
    <property type="nucleotide sequence ID" value="NC_002695.1"/>
</dbReference>
<dbReference type="RefSeq" id="WP_001146509.1">
    <property type="nucleotide sequence ID" value="NZ_VOAI01000004.1"/>
</dbReference>
<dbReference type="SMR" id="Q8XDM1"/>
<dbReference type="STRING" id="155864.Z4992"/>
<dbReference type="GeneID" id="75173767"/>
<dbReference type="GeneID" id="915612"/>
<dbReference type="KEGG" id="ece:Z4992"/>
<dbReference type="KEGG" id="ecs:ECs_4450"/>
<dbReference type="PATRIC" id="fig|386585.9.peg.4659"/>
<dbReference type="eggNOG" id="COG1129">
    <property type="taxonomic scope" value="Bacteria"/>
</dbReference>
<dbReference type="HOGENOM" id="CLU_000604_92_3_6"/>
<dbReference type="OMA" id="RMNYPAM"/>
<dbReference type="Proteomes" id="UP000000558">
    <property type="component" value="Chromosome"/>
</dbReference>
<dbReference type="Proteomes" id="UP000002519">
    <property type="component" value="Chromosome"/>
</dbReference>
<dbReference type="GO" id="GO:0005886">
    <property type="term" value="C:plasma membrane"/>
    <property type="evidence" value="ECO:0007669"/>
    <property type="project" value="UniProtKB-SubCell"/>
</dbReference>
<dbReference type="GO" id="GO:0015614">
    <property type="term" value="F:ABC-type D-xylose transporter activity"/>
    <property type="evidence" value="ECO:0007669"/>
    <property type="project" value="UniProtKB-EC"/>
</dbReference>
<dbReference type="GO" id="GO:0005524">
    <property type="term" value="F:ATP binding"/>
    <property type="evidence" value="ECO:0007669"/>
    <property type="project" value="UniProtKB-KW"/>
</dbReference>
<dbReference type="GO" id="GO:0016887">
    <property type="term" value="F:ATP hydrolysis activity"/>
    <property type="evidence" value="ECO:0007669"/>
    <property type="project" value="InterPro"/>
</dbReference>
<dbReference type="CDD" id="cd03216">
    <property type="entry name" value="ABC_Carb_Monos_I"/>
    <property type="match status" value="1"/>
</dbReference>
<dbReference type="CDD" id="cd03215">
    <property type="entry name" value="ABC_Carb_Monos_II"/>
    <property type="match status" value="1"/>
</dbReference>
<dbReference type="FunFam" id="3.40.50.300:FF:000126">
    <property type="entry name" value="Galactose/methyl galactoside import ATP-binding protein MglA"/>
    <property type="match status" value="1"/>
</dbReference>
<dbReference type="FunFam" id="3.40.50.300:FF:000127">
    <property type="entry name" value="Ribose import ATP-binding protein RbsA"/>
    <property type="match status" value="1"/>
</dbReference>
<dbReference type="Gene3D" id="3.40.50.300">
    <property type="entry name" value="P-loop containing nucleotide triphosphate hydrolases"/>
    <property type="match status" value="2"/>
</dbReference>
<dbReference type="InterPro" id="IPR003593">
    <property type="entry name" value="AAA+_ATPase"/>
</dbReference>
<dbReference type="InterPro" id="IPR050107">
    <property type="entry name" value="ABC_carbohydrate_import_ATPase"/>
</dbReference>
<dbReference type="InterPro" id="IPR003439">
    <property type="entry name" value="ABC_transporter-like_ATP-bd"/>
</dbReference>
<dbReference type="InterPro" id="IPR017871">
    <property type="entry name" value="ABC_transporter-like_CS"/>
</dbReference>
<dbReference type="InterPro" id="IPR013455">
    <property type="entry name" value="ABC_transptr_XylG"/>
</dbReference>
<dbReference type="InterPro" id="IPR027417">
    <property type="entry name" value="P-loop_NTPase"/>
</dbReference>
<dbReference type="NCBIfam" id="NF010069">
    <property type="entry name" value="PRK13549.1"/>
    <property type="match status" value="1"/>
</dbReference>
<dbReference type="NCBIfam" id="TIGR02633">
    <property type="entry name" value="xylG"/>
    <property type="match status" value="1"/>
</dbReference>
<dbReference type="PANTHER" id="PTHR43790">
    <property type="entry name" value="CARBOHYDRATE TRANSPORT ATP-BINDING PROTEIN MG119-RELATED"/>
    <property type="match status" value="1"/>
</dbReference>
<dbReference type="PANTHER" id="PTHR43790:SF1">
    <property type="entry name" value="XYLOSE IMPORT ATP-BINDING PROTEIN XYLG"/>
    <property type="match status" value="1"/>
</dbReference>
<dbReference type="Pfam" id="PF00005">
    <property type="entry name" value="ABC_tran"/>
    <property type="match status" value="2"/>
</dbReference>
<dbReference type="SMART" id="SM00382">
    <property type="entry name" value="AAA"/>
    <property type="match status" value="2"/>
</dbReference>
<dbReference type="SUPFAM" id="SSF52540">
    <property type="entry name" value="P-loop containing nucleoside triphosphate hydrolases"/>
    <property type="match status" value="2"/>
</dbReference>
<dbReference type="PROSITE" id="PS00211">
    <property type="entry name" value="ABC_TRANSPORTER_1"/>
    <property type="match status" value="1"/>
</dbReference>
<dbReference type="PROSITE" id="PS50893">
    <property type="entry name" value="ABC_TRANSPORTER_2"/>
    <property type="match status" value="2"/>
</dbReference>
<dbReference type="PROSITE" id="PS51280">
    <property type="entry name" value="XYLG"/>
    <property type="match status" value="1"/>
</dbReference>
<feature type="chain" id="PRO_0000271502" description="Xylose import ATP-binding protein XylG">
    <location>
        <begin position="1"/>
        <end position="513"/>
    </location>
</feature>
<feature type="domain" description="ABC transporter 1" evidence="1">
    <location>
        <begin position="5"/>
        <end position="242"/>
    </location>
</feature>
<feature type="domain" description="ABC transporter 2" evidence="1">
    <location>
        <begin position="259"/>
        <end position="505"/>
    </location>
</feature>
<feature type="binding site" evidence="1">
    <location>
        <begin position="37"/>
        <end position="44"/>
    </location>
    <ligand>
        <name>ATP</name>
        <dbReference type="ChEBI" id="CHEBI:30616"/>
    </ligand>
</feature>
<keyword id="KW-0067">ATP-binding</keyword>
<keyword id="KW-0997">Cell inner membrane</keyword>
<keyword id="KW-1003">Cell membrane</keyword>
<keyword id="KW-0472">Membrane</keyword>
<keyword id="KW-0547">Nucleotide-binding</keyword>
<keyword id="KW-1185">Reference proteome</keyword>
<keyword id="KW-0677">Repeat</keyword>
<keyword id="KW-0762">Sugar transport</keyword>
<keyword id="KW-1278">Translocase</keyword>
<keyword id="KW-0813">Transport</keyword>
<proteinExistence type="inferred from homology"/>
<organism>
    <name type="scientific">Escherichia coli O157:H7</name>
    <dbReference type="NCBI Taxonomy" id="83334"/>
    <lineage>
        <taxon>Bacteria</taxon>
        <taxon>Pseudomonadati</taxon>
        <taxon>Pseudomonadota</taxon>
        <taxon>Gammaproteobacteria</taxon>
        <taxon>Enterobacterales</taxon>
        <taxon>Enterobacteriaceae</taxon>
        <taxon>Escherichia</taxon>
    </lineage>
</organism>
<comment type="function">
    <text evidence="1">Part of the ABC transporter complex XylFGH involved in xylose import. Responsible for energy coupling to the transport system.</text>
</comment>
<comment type="catalytic activity">
    <reaction evidence="1">
        <text>D-xylose(out) + ATP + H2O = D-xylose(in) + ADP + phosphate + H(+)</text>
        <dbReference type="Rhea" id="RHEA:29899"/>
        <dbReference type="ChEBI" id="CHEBI:15377"/>
        <dbReference type="ChEBI" id="CHEBI:15378"/>
        <dbReference type="ChEBI" id="CHEBI:30616"/>
        <dbReference type="ChEBI" id="CHEBI:43474"/>
        <dbReference type="ChEBI" id="CHEBI:53455"/>
        <dbReference type="ChEBI" id="CHEBI:456216"/>
        <dbReference type="EC" id="7.5.2.10"/>
    </reaction>
</comment>
<comment type="subunit">
    <text evidence="1">The complex is composed of two ATP-binding proteins (XylG), two transmembrane proteins (XylH) and a solute-binding protein (XylF).</text>
</comment>
<comment type="subcellular location">
    <subcellularLocation>
        <location evidence="1">Cell inner membrane</location>
        <topology evidence="1">Peripheral membrane protein</topology>
    </subcellularLocation>
</comment>
<comment type="similarity">
    <text evidence="1">Belongs to the ABC transporter superfamily. Xylose importer (TC 3.A.1.2.4) family.</text>
</comment>